<feature type="chain" id="PRO_0000406558" description="DNA primase">
    <location>
        <begin position="1"/>
        <end position="1074"/>
    </location>
</feature>
<feature type="zinc finger region" description="CHC2-type" evidence="1">
    <location>
        <begin position="1012"/>
        <end position="1052"/>
    </location>
</feature>
<feature type="site" description="Essential for primase activity" evidence="1">
    <location>
        <position position="659"/>
    </location>
</feature>
<feature type="site" description="Essential for primase activity" evidence="1">
    <location>
        <position position="661"/>
    </location>
</feature>
<organismHost>
    <name type="scientific">Gallus gallus</name>
    <name type="common">Chicken</name>
    <dbReference type="NCBI Taxonomy" id="9031"/>
</organismHost>
<name>PRIM_GAHVM</name>
<keyword id="KW-0235">DNA replication</keyword>
<keyword id="KW-1048">Host nucleus</keyword>
<keyword id="KW-0479">Metal-binding</keyword>
<keyword id="KW-1185">Reference proteome</keyword>
<keyword id="KW-0808">Transferase</keyword>
<keyword id="KW-0862">Zinc</keyword>
<keyword id="KW-0863">Zinc-finger</keyword>
<reference key="1">
    <citation type="journal article" date="2000" name="J. Virol.">
        <title>The genome of a very virulent Marek's disease virus.</title>
        <authorList>
            <person name="Tulman E.R."/>
            <person name="Afonso C.L."/>
            <person name="Lu Z."/>
            <person name="Zsak L."/>
            <person name="Rock D.L."/>
            <person name="Kutish G.F."/>
        </authorList>
    </citation>
    <scope>NUCLEOTIDE SEQUENCE [LARGE SCALE GENOMIC DNA]</scope>
</reference>
<organism>
    <name type="scientific">Gallid herpesvirus 2 (strain Chicken/Md5/ATCC VR-987)</name>
    <name type="common">GaHV-2</name>
    <name type="synonym">Marek's disease herpesvirus type 1</name>
    <dbReference type="NCBI Taxonomy" id="10389"/>
    <lineage>
        <taxon>Viruses</taxon>
        <taxon>Duplodnaviria</taxon>
        <taxon>Heunggongvirae</taxon>
        <taxon>Peploviricota</taxon>
        <taxon>Herviviricetes</taxon>
        <taxon>Herpesvirales</taxon>
        <taxon>Orthoherpesviridae</taxon>
        <taxon>Alphaherpesvirinae</taxon>
        <taxon>Mardivirus</taxon>
        <taxon>Mardivirus gallidalpha2</taxon>
        <taxon>Gallid alphaherpesvirus 2</taxon>
    </lineage>
</organism>
<sequence length="1074" mass="120176">MARFSSISDTLESDDSGIKVLFAVDGCAVSFSLALLTGQIPSTNSVYVIGYWDPSDRFSSIPFLDGDPNTNERISTTVCNLEDVPSPLRVEFCLLNQMASGMGGADLKLRTRAIFVCRFTSWSEMNAIANSIIYGTPIQAGVLQATISETETFMLHDEFNLALHVFLNGLSLKGRNKKDVCMSLNHNYISSVSENFPRGKRGLTGLYLQHEQKVTAAYRRIYGGSTTTAFWYVSKFGPDEKSLVLALRYYLLQAQEEVTGIATGYDLQAIKDICKTYAVSVNPNPTGFLAADLTSFSRLSRFCCLSYYSKGSVAIAFPSYVERRIMADIAEVDALREYIERDRPSLKISDLEFVKYIYLAYFECYNREQLKRHLKDVTVSLPDEDIYKKSSLGKCAVENFFTHVRSRLNVNDHIAHNVLPEQVEMGNKLVRKFGRARMYLSTTMTNESHFTGICECASVILKRLDTLEMKLQKYGWPSDRVDGSNLMADNQNNSTLIPYDKSRSSGMILECSNTHSRGGPMIVKRLLALVSADSRAGGIGPANMLMGIDSAIDGPLPVYRVGMSKGRQAFTVLMTECWERTIPSPGSAKAHLIKLNNSYGTSTEDLISRDLFLTSEIEQLIGSTVELPEITCGSADEQQYINRNEVFNGNLAIGNIVLDVDIHLRNPIPLRLMHAAIRGFRSGILRALALLLPKANIDHGSYPCYFYKSSCKKSRVMGGAPWMLHDAELAPDYSMFENAEFDLEMGIDDPLLIDQIDESLTRWSSESSRSVDLDPDKPCGCHDKIGLRVCIPVPSPYLLVGSKTLAGLSRIIQQAVLLERNFVETIGPYLKNYEIIDSGVYGHGRSLRLPFFGKIDENGIVSRRLVPFFVIPDDCADMEKFIVAHFEPKNFHFHSSIPLEKAAIILKDIGGEYAGFFERKITVNRDIFFGTRLSLSIALRERGVDINDCAAITTFVTDHILDDIITYVYEHIPDHAIEYQNLSVSCCVVKSDWILLQLIPNKTIGYRHGFTCVRFKHARARRASARSYLALNVDAHGRLCVCVIQQCFAAKCGNNKLRTLFTVDIDSKCRLEHQ</sequence>
<proteinExistence type="inferred from homology"/>
<evidence type="ECO:0000255" key="1">
    <source>
        <dbReference type="HAMAP-Rule" id="MF_04011"/>
    </source>
</evidence>
<accession>Q9E6M4</accession>
<protein>
    <recommendedName>
        <fullName evidence="1">DNA primase</fullName>
        <ecNumber evidence="1">2.7.7.-</ecNumber>
    </recommendedName>
</protein>
<dbReference type="EC" id="2.7.7.-" evidence="1"/>
<dbReference type="EMBL" id="AF243438">
    <property type="protein sequence ID" value="AAG14246.1"/>
    <property type="molecule type" value="Genomic_DNA"/>
</dbReference>
<dbReference type="RefSeq" id="YP_001033982.1">
    <property type="nucleotide sequence ID" value="NC_002229.3"/>
</dbReference>
<dbReference type="GeneID" id="4811527"/>
<dbReference type="KEGG" id="vg:4811527"/>
<dbReference type="Proteomes" id="UP000008072">
    <property type="component" value="Segment"/>
</dbReference>
<dbReference type="GO" id="GO:0042025">
    <property type="term" value="C:host cell nucleus"/>
    <property type="evidence" value="ECO:0007669"/>
    <property type="project" value="UniProtKB-SubCell"/>
</dbReference>
<dbReference type="GO" id="GO:0003899">
    <property type="term" value="F:DNA-directed RNA polymerase activity"/>
    <property type="evidence" value="ECO:0007669"/>
    <property type="project" value="InterPro"/>
</dbReference>
<dbReference type="GO" id="GO:0008270">
    <property type="term" value="F:zinc ion binding"/>
    <property type="evidence" value="ECO:0007669"/>
    <property type="project" value="UniProtKB-KW"/>
</dbReference>
<dbReference type="GO" id="GO:0039686">
    <property type="term" value="P:bidirectional double-stranded viral DNA replication"/>
    <property type="evidence" value="ECO:0007669"/>
    <property type="project" value="InterPro"/>
</dbReference>
<dbReference type="GO" id="GO:0006260">
    <property type="term" value="P:DNA replication"/>
    <property type="evidence" value="ECO:0007669"/>
    <property type="project" value="UniProtKB-KW"/>
</dbReference>
<dbReference type="HAMAP" id="MF_04011">
    <property type="entry name" value="HSV_PRIM"/>
    <property type="match status" value="1"/>
</dbReference>
<dbReference type="InterPro" id="IPR033685">
    <property type="entry name" value="HSV_PRIM"/>
</dbReference>
<dbReference type="Pfam" id="PF03121">
    <property type="entry name" value="Herpes_UL52"/>
    <property type="match status" value="1"/>
</dbReference>
<gene>
    <name type="primary">MDV066</name>
</gene>
<comment type="function">
    <text evidence="1">Essential component of the helicase/primase complex. Unwinds the DNA at the replication forks and generates single-stranded DNA for both leading and lagging strand synthesis. The primase initiates primer synthesis and thereby produces large amount of short RNA primers on the lagging strand that the polymerase elongates using dNTPs.</text>
</comment>
<comment type="subunit">
    <text evidence="1">Associates with the helicase and the primase-associated factor to form the helicase-primase factor.</text>
</comment>
<comment type="subcellular location">
    <subcellularLocation>
        <location evidence="1">Host nucleus</location>
    </subcellularLocation>
    <text evidence="1">Requires the presence of the primase associated factor to properly localize in the host cell nucleus.</text>
</comment>
<comment type="similarity">
    <text evidence="1">Belongs to the herpesviridae DNA primase family.</text>
</comment>